<gene>
    <name type="primary">TPC1</name>
    <name type="ORF">Kpol_1018p133</name>
</gene>
<keyword id="KW-0472">Membrane</keyword>
<keyword id="KW-0496">Mitochondrion</keyword>
<keyword id="KW-0999">Mitochondrion inner membrane</keyword>
<keyword id="KW-1185">Reference proteome</keyword>
<keyword id="KW-0677">Repeat</keyword>
<keyword id="KW-0812">Transmembrane</keyword>
<keyword id="KW-1133">Transmembrane helix</keyword>
<keyword id="KW-0813">Transport</keyword>
<name>TPC1_VANPO</name>
<reference key="1">
    <citation type="journal article" date="2007" name="Proc. Natl. Acad. Sci. U.S.A.">
        <title>Independent sorting-out of thousands of duplicated gene pairs in two yeast species descended from a whole-genome duplication.</title>
        <authorList>
            <person name="Scannell D.R."/>
            <person name="Frank A.C."/>
            <person name="Conant G.C."/>
            <person name="Byrne K.P."/>
            <person name="Woolfit M."/>
            <person name="Wolfe K.H."/>
        </authorList>
    </citation>
    <scope>NUCLEOTIDE SEQUENCE [LARGE SCALE GENOMIC DNA]</scope>
    <source>
        <strain>ATCC 22028 / DSM 70294 / BCRC 21397 / CBS 2163 / NBRC 10782 / NRRL Y-8283 / UCD 57-17</strain>
    </source>
</reference>
<evidence type="ECO:0000250" key="1"/>
<evidence type="ECO:0000255" key="2"/>
<evidence type="ECO:0000305" key="3"/>
<protein>
    <recommendedName>
        <fullName>Mitochondrial thiamine pyrophosphate carrier 1</fullName>
    </recommendedName>
</protein>
<comment type="function">
    <text evidence="1">Mitochondrial transporter that mediates uptake of thiamine pyrophosphate (ThPP) into mitochondria.</text>
</comment>
<comment type="subcellular location">
    <subcellularLocation>
        <location evidence="1">Mitochondrion inner membrane</location>
        <topology evidence="1">Multi-pass membrane protein</topology>
    </subcellularLocation>
</comment>
<comment type="similarity">
    <text evidence="3">Belongs to the mitochondrial carrier (TC 2.A.29) family.</text>
</comment>
<proteinExistence type="inferred from homology"/>
<feature type="chain" id="PRO_0000320475" description="Mitochondrial thiamine pyrophosphate carrier 1">
    <location>
        <begin position="1"/>
        <end position="297"/>
    </location>
</feature>
<feature type="transmembrane region" description="Helical; Name=1" evidence="2">
    <location>
        <begin position="19"/>
        <end position="36"/>
    </location>
</feature>
<feature type="transmembrane region" description="Helical; Name=2" evidence="2">
    <location>
        <begin position="75"/>
        <end position="91"/>
    </location>
</feature>
<feature type="transmembrane region" description="Helical; Name=3" evidence="2">
    <location>
        <begin position="109"/>
        <end position="128"/>
    </location>
</feature>
<feature type="transmembrane region" description="Helical; Name=4" evidence="2">
    <location>
        <begin position="163"/>
        <end position="187"/>
    </location>
</feature>
<feature type="transmembrane region" description="Helical; Name=5" evidence="2">
    <location>
        <begin position="203"/>
        <end position="219"/>
    </location>
</feature>
<feature type="transmembrane region" description="Helical; Name=6" evidence="2">
    <location>
        <begin position="270"/>
        <end position="287"/>
    </location>
</feature>
<feature type="repeat" description="Solcar 1">
    <location>
        <begin position="13"/>
        <end position="94"/>
    </location>
</feature>
<feature type="repeat" description="Solcar 2">
    <location>
        <begin position="102"/>
        <end position="195"/>
    </location>
</feature>
<feature type="repeat" description="Solcar 3">
    <location>
        <begin position="196"/>
        <end position="295"/>
    </location>
</feature>
<dbReference type="EMBL" id="DS480378">
    <property type="protein sequence ID" value="EDO19595.1"/>
    <property type="molecule type" value="Genomic_DNA"/>
</dbReference>
<dbReference type="RefSeq" id="XP_001647453.1">
    <property type="nucleotide sequence ID" value="XM_001647403.1"/>
</dbReference>
<dbReference type="SMR" id="A7TDX5"/>
<dbReference type="FunCoup" id="A7TDX5">
    <property type="interactions" value="44"/>
</dbReference>
<dbReference type="STRING" id="436907.A7TDX5"/>
<dbReference type="GeneID" id="5547958"/>
<dbReference type="KEGG" id="vpo:Kpol_1018p133"/>
<dbReference type="eggNOG" id="KOG0752">
    <property type="taxonomic scope" value="Eukaryota"/>
</dbReference>
<dbReference type="HOGENOM" id="CLU_015166_10_3_1"/>
<dbReference type="InParanoid" id="A7TDX5"/>
<dbReference type="OMA" id="MYVCYGA"/>
<dbReference type="OrthoDB" id="18574at2759"/>
<dbReference type="PhylomeDB" id="A7TDX5"/>
<dbReference type="Proteomes" id="UP000000267">
    <property type="component" value="Unassembled WGS sequence"/>
</dbReference>
<dbReference type="GO" id="GO:0005743">
    <property type="term" value="C:mitochondrial inner membrane"/>
    <property type="evidence" value="ECO:0007669"/>
    <property type="project" value="UniProtKB-SubCell"/>
</dbReference>
<dbReference type="GO" id="GO:0090422">
    <property type="term" value="F:thiamine pyrophosphate transmembrane transporter activity"/>
    <property type="evidence" value="ECO:0007669"/>
    <property type="project" value="EnsemblFungi"/>
</dbReference>
<dbReference type="GO" id="GO:1990545">
    <property type="term" value="P:mitochondrial thiamine pyrophosphate transmembrane transport"/>
    <property type="evidence" value="ECO:0007669"/>
    <property type="project" value="EnsemblFungi"/>
</dbReference>
<dbReference type="Gene3D" id="1.50.40.10">
    <property type="entry name" value="Mitochondrial carrier domain"/>
    <property type="match status" value="1"/>
</dbReference>
<dbReference type="InterPro" id="IPR002067">
    <property type="entry name" value="Mit_carrier"/>
</dbReference>
<dbReference type="InterPro" id="IPR018108">
    <property type="entry name" value="Mitochondrial_sb/sol_carrier"/>
</dbReference>
<dbReference type="InterPro" id="IPR023395">
    <property type="entry name" value="Mt_carrier_dom_sf"/>
</dbReference>
<dbReference type="PANTHER" id="PTHR24089">
    <property type="entry name" value="SOLUTE CARRIER FAMILY 25"/>
    <property type="match status" value="1"/>
</dbReference>
<dbReference type="Pfam" id="PF00153">
    <property type="entry name" value="Mito_carr"/>
    <property type="match status" value="3"/>
</dbReference>
<dbReference type="PRINTS" id="PR00926">
    <property type="entry name" value="MITOCARRIER"/>
</dbReference>
<dbReference type="SUPFAM" id="SSF103506">
    <property type="entry name" value="Mitochondrial carrier"/>
    <property type="match status" value="1"/>
</dbReference>
<dbReference type="PROSITE" id="PS50920">
    <property type="entry name" value="SOLCAR"/>
    <property type="match status" value="3"/>
</dbReference>
<organism>
    <name type="scientific">Vanderwaltozyma polyspora (strain ATCC 22028 / DSM 70294 / BCRC 21397 / CBS 2163 / NBRC 10782 / NRRL Y-8283 / UCD 57-17)</name>
    <name type="common">Kluyveromyces polysporus</name>
    <dbReference type="NCBI Taxonomy" id="436907"/>
    <lineage>
        <taxon>Eukaryota</taxon>
        <taxon>Fungi</taxon>
        <taxon>Dikarya</taxon>
        <taxon>Ascomycota</taxon>
        <taxon>Saccharomycotina</taxon>
        <taxon>Saccharomycetes</taxon>
        <taxon>Saccharomycetales</taxon>
        <taxon>Saccharomycetaceae</taxon>
        <taxon>Vanderwaltozyma</taxon>
    </lineage>
</organism>
<accession>A7TDX5</accession>
<sequence length="297" mass="32264">MREEDHLRKGEKSHVFESLVSGAIAGLAARSAIAPLDTLKLRLQLGTDTLPHTLKSLIRHEGLLALWKGNLAGSIMYIIYGSVQFGTYSYTNAALLKVCDVPPTIHSTLAGAITGMASSLCSYPFDVLRTRLATTTTTTTTATTGRSGRGLYQHIERIYIREGLGGFFHGVATSMANVTVSTAAMFGTYEGIRARWPETNAGTAGAISGVISRTITFPLDTIRRRLQIRTSSELGQMTNNGYIGKHMQRSAITLCVQIVRDEGVKVLFRGIGLGLLKSVPNTAINLWVYENLMRVLT</sequence>